<name>MUTS_RHILO</name>
<dbReference type="EMBL" id="BA000012">
    <property type="protein sequence ID" value="BAB51800.1"/>
    <property type="molecule type" value="Genomic_DNA"/>
</dbReference>
<dbReference type="RefSeq" id="WP_010913139.1">
    <property type="nucleotide sequence ID" value="NC_002678.2"/>
</dbReference>
<dbReference type="SMR" id="Q98C21"/>
<dbReference type="KEGG" id="mlo:mll5328"/>
<dbReference type="PATRIC" id="fig|266835.9.peg.4226"/>
<dbReference type="eggNOG" id="COG0249">
    <property type="taxonomic scope" value="Bacteria"/>
</dbReference>
<dbReference type="HOGENOM" id="CLU_002472_4_0_5"/>
<dbReference type="Proteomes" id="UP000000552">
    <property type="component" value="Chromosome"/>
</dbReference>
<dbReference type="GO" id="GO:0005829">
    <property type="term" value="C:cytosol"/>
    <property type="evidence" value="ECO:0007669"/>
    <property type="project" value="TreeGrafter"/>
</dbReference>
<dbReference type="GO" id="GO:0005524">
    <property type="term" value="F:ATP binding"/>
    <property type="evidence" value="ECO:0007669"/>
    <property type="project" value="UniProtKB-UniRule"/>
</dbReference>
<dbReference type="GO" id="GO:0140664">
    <property type="term" value="F:ATP-dependent DNA damage sensor activity"/>
    <property type="evidence" value="ECO:0007669"/>
    <property type="project" value="InterPro"/>
</dbReference>
<dbReference type="GO" id="GO:0003684">
    <property type="term" value="F:damaged DNA binding"/>
    <property type="evidence" value="ECO:0007669"/>
    <property type="project" value="UniProtKB-UniRule"/>
</dbReference>
<dbReference type="GO" id="GO:0030983">
    <property type="term" value="F:mismatched DNA binding"/>
    <property type="evidence" value="ECO:0007669"/>
    <property type="project" value="InterPro"/>
</dbReference>
<dbReference type="GO" id="GO:0006298">
    <property type="term" value="P:mismatch repair"/>
    <property type="evidence" value="ECO:0007669"/>
    <property type="project" value="UniProtKB-UniRule"/>
</dbReference>
<dbReference type="CDD" id="cd03284">
    <property type="entry name" value="ABC_MutS1"/>
    <property type="match status" value="1"/>
</dbReference>
<dbReference type="FunFam" id="3.40.1170.10:FF:000001">
    <property type="entry name" value="DNA mismatch repair protein MutS"/>
    <property type="match status" value="1"/>
</dbReference>
<dbReference type="Gene3D" id="1.10.1420.10">
    <property type="match status" value="2"/>
</dbReference>
<dbReference type="Gene3D" id="6.10.140.430">
    <property type="match status" value="1"/>
</dbReference>
<dbReference type="Gene3D" id="3.40.1170.10">
    <property type="entry name" value="DNA repair protein MutS, domain I"/>
    <property type="match status" value="1"/>
</dbReference>
<dbReference type="Gene3D" id="3.30.420.110">
    <property type="entry name" value="MutS, connector domain"/>
    <property type="match status" value="1"/>
</dbReference>
<dbReference type="Gene3D" id="3.40.50.300">
    <property type="entry name" value="P-loop containing nucleotide triphosphate hydrolases"/>
    <property type="match status" value="1"/>
</dbReference>
<dbReference type="HAMAP" id="MF_00096">
    <property type="entry name" value="MutS"/>
    <property type="match status" value="1"/>
</dbReference>
<dbReference type="InterPro" id="IPR005748">
    <property type="entry name" value="DNA_mismatch_repair_MutS"/>
</dbReference>
<dbReference type="InterPro" id="IPR007695">
    <property type="entry name" value="DNA_mismatch_repair_MutS-lik_N"/>
</dbReference>
<dbReference type="InterPro" id="IPR017261">
    <property type="entry name" value="DNA_mismatch_repair_MutS/MSH"/>
</dbReference>
<dbReference type="InterPro" id="IPR000432">
    <property type="entry name" value="DNA_mismatch_repair_MutS_C"/>
</dbReference>
<dbReference type="InterPro" id="IPR007861">
    <property type="entry name" value="DNA_mismatch_repair_MutS_clamp"/>
</dbReference>
<dbReference type="InterPro" id="IPR007696">
    <property type="entry name" value="DNA_mismatch_repair_MutS_core"/>
</dbReference>
<dbReference type="InterPro" id="IPR016151">
    <property type="entry name" value="DNA_mismatch_repair_MutS_N"/>
</dbReference>
<dbReference type="InterPro" id="IPR036187">
    <property type="entry name" value="DNA_mismatch_repair_MutS_sf"/>
</dbReference>
<dbReference type="InterPro" id="IPR007860">
    <property type="entry name" value="DNA_mmatch_repair_MutS_con_dom"/>
</dbReference>
<dbReference type="InterPro" id="IPR045076">
    <property type="entry name" value="MutS"/>
</dbReference>
<dbReference type="InterPro" id="IPR036678">
    <property type="entry name" value="MutS_con_dom_sf"/>
</dbReference>
<dbReference type="InterPro" id="IPR027417">
    <property type="entry name" value="P-loop_NTPase"/>
</dbReference>
<dbReference type="NCBIfam" id="TIGR01070">
    <property type="entry name" value="mutS1"/>
    <property type="match status" value="1"/>
</dbReference>
<dbReference type="NCBIfam" id="NF003810">
    <property type="entry name" value="PRK05399.1"/>
    <property type="match status" value="1"/>
</dbReference>
<dbReference type="PANTHER" id="PTHR11361:SF34">
    <property type="entry name" value="DNA MISMATCH REPAIR PROTEIN MSH1, MITOCHONDRIAL"/>
    <property type="match status" value="1"/>
</dbReference>
<dbReference type="PANTHER" id="PTHR11361">
    <property type="entry name" value="DNA MISMATCH REPAIR PROTEIN MUTS FAMILY MEMBER"/>
    <property type="match status" value="1"/>
</dbReference>
<dbReference type="Pfam" id="PF01624">
    <property type="entry name" value="MutS_I"/>
    <property type="match status" value="1"/>
</dbReference>
<dbReference type="Pfam" id="PF05188">
    <property type="entry name" value="MutS_II"/>
    <property type="match status" value="1"/>
</dbReference>
<dbReference type="Pfam" id="PF05192">
    <property type="entry name" value="MutS_III"/>
    <property type="match status" value="1"/>
</dbReference>
<dbReference type="Pfam" id="PF05190">
    <property type="entry name" value="MutS_IV"/>
    <property type="match status" value="1"/>
</dbReference>
<dbReference type="Pfam" id="PF00488">
    <property type="entry name" value="MutS_V"/>
    <property type="match status" value="1"/>
</dbReference>
<dbReference type="PIRSF" id="PIRSF037677">
    <property type="entry name" value="DNA_mis_repair_Msh6"/>
    <property type="match status" value="1"/>
</dbReference>
<dbReference type="SMART" id="SM00534">
    <property type="entry name" value="MUTSac"/>
    <property type="match status" value="1"/>
</dbReference>
<dbReference type="SMART" id="SM00533">
    <property type="entry name" value="MUTSd"/>
    <property type="match status" value="1"/>
</dbReference>
<dbReference type="SUPFAM" id="SSF55271">
    <property type="entry name" value="DNA repair protein MutS, domain I"/>
    <property type="match status" value="1"/>
</dbReference>
<dbReference type="SUPFAM" id="SSF53150">
    <property type="entry name" value="DNA repair protein MutS, domain II"/>
    <property type="match status" value="1"/>
</dbReference>
<dbReference type="SUPFAM" id="SSF48334">
    <property type="entry name" value="DNA repair protein MutS, domain III"/>
    <property type="match status" value="1"/>
</dbReference>
<dbReference type="SUPFAM" id="SSF52540">
    <property type="entry name" value="P-loop containing nucleoside triphosphate hydrolases"/>
    <property type="match status" value="1"/>
</dbReference>
<dbReference type="PROSITE" id="PS00486">
    <property type="entry name" value="DNA_MISMATCH_REPAIR_2"/>
    <property type="match status" value="1"/>
</dbReference>
<organism>
    <name type="scientific">Mesorhizobium japonicum (strain LMG 29417 / CECT 9101 / MAFF 303099)</name>
    <name type="common">Mesorhizobium loti (strain MAFF 303099)</name>
    <dbReference type="NCBI Taxonomy" id="266835"/>
    <lineage>
        <taxon>Bacteria</taxon>
        <taxon>Pseudomonadati</taxon>
        <taxon>Pseudomonadota</taxon>
        <taxon>Alphaproteobacteria</taxon>
        <taxon>Hyphomicrobiales</taxon>
        <taxon>Phyllobacteriaceae</taxon>
        <taxon>Mesorhizobium</taxon>
    </lineage>
</organism>
<proteinExistence type="inferred from homology"/>
<accession>Q98C21</accession>
<evidence type="ECO:0000255" key="1">
    <source>
        <dbReference type="HAMAP-Rule" id="MF_00096"/>
    </source>
</evidence>
<evidence type="ECO:0000256" key="2">
    <source>
        <dbReference type="SAM" id="MobiDB-lite"/>
    </source>
</evidence>
<protein>
    <recommendedName>
        <fullName evidence="1">DNA mismatch repair protein MutS</fullName>
    </recommendedName>
</protein>
<keyword id="KW-0067">ATP-binding</keyword>
<keyword id="KW-0227">DNA damage</keyword>
<keyword id="KW-0234">DNA repair</keyword>
<keyword id="KW-0238">DNA-binding</keyword>
<keyword id="KW-0547">Nucleotide-binding</keyword>
<comment type="function">
    <text evidence="1">This protein is involved in the repair of mismatches in DNA. It is possible that it carries out the mismatch recognition step. This protein has a weak ATPase activity.</text>
</comment>
<comment type="similarity">
    <text evidence="1">Belongs to the DNA mismatch repair MutS family.</text>
</comment>
<gene>
    <name evidence="1" type="primary">mutS</name>
    <name type="ordered locus">mll5328</name>
</gene>
<reference key="1">
    <citation type="journal article" date="2000" name="DNA Res.">
        <title>Complete genome structure of the nitrogen-fixing symbiotic bacterium Mesorhizobium loti.</title>
        <authorList>
            <person name="Kaneko T."/>
            <person name="Nakamura Y."/>
            <person name="Sato S."/>
            <person name="Asamizu E."/>
            <person name="Kato T."/>
            <person name="Sasamoto S."/>
            <person name="Watanabe A."/>
            <person name="Idesawa K."/>
            <person name="Ishikawa A."/>
            <person name="Kawashima K."/>
            <person name="Kimura T."/>
            <person name="Kishida Y."/>
            <person name="Kiyokawa C."/>
            <person name="Kohara M."/>
            <person name="Matsumoto M."/>
            <person name="Matsuno A."/>
            <person name="Mochizuki Y."/>
            <person name="Nakayama S."/>
            <person name="Nakazaki N."/>
            <person name="Shimpo S."/>
            <person name="Sugimoto M."/>
            <person name="Takeuchi C."/>
            <person name="Yamada M."/>
            <person name="Tabata S."/>
        </authorList>
    </citation>
    <scope>NUCLEOTIDE SEQUENCE [LARGE SCALE GENOMIC DNA]</scope>
    <source>
        <strain>LMG 29417 / CECT 9101 / MAFF 303099</strain>
    </source>
</reference>
<sequence length="909" mass="98111">MNMHSPNEPDAPEVMTTPQPGTAAVTPMMEQFIEIKAANPDSLLFYRMGDFYELFFDDAEKASRALGIVLTKRGKHQGHDIPMCGVPVHAADDYLQKLIGQGFRVAVCEQIEDPAEAKKRGSKSVVRRDVVRLVTPGTITEDKLLAPSESSFLMALGRVKGGSDHSFAIAWIDISTGAFRVAETTADRLLADIFRVDPRELIVAEPVFHDPELRPVFDVLGRVANPQPPSLFDSASATGRIARFFDVATPDSFGTFSRAELSAISGAIAYVEKTQKAERPPLSRPEREEQGSTLFIDPATRGNLELLRTLSGSREGSLFKAIDRTVTGGGARLLADRLMAPLTDPAAIGARLDSVSFFRTETRLCQAVRASLKSVADMPRALSRLALNRGGPRDLGALRAGFEAAGAIVEIFAATALPQELAEAMAAIRALPQALAQHLIQALGEELPLLKRDGGFLRGGYHPELDEMRALRDESRKVIAGLERSLIEETGIRSLKIRHNNVLGYYIEVTANHHAIMTGSDGAKARFIHRQTMANAMRFTTTELAELETKIANAADRALGIELAAFEALTAQAVGEAEKIRAGADALAAIDVSAALALLSESEAWCRPVVDSSLAFEISGGRHPVVEQALRRSGEGPFVANDCDLSPEGNAKNGAIWLLTGPNMGGKSTFLRQNALIAILAQTGSFVPATSAHIGVVDRLFSRVGASDDLARGRSTFMVEMVETAAILNQAGERALVILDEIGRGTATFDGLSIAWAAVEYLHEKNRCRAIFATHFHEMTSLAGKLARLHNVTMRVKEWEGDVVFLHEVGKGAADRSYGVQVARLAGLPEAVVDRAKQVLHQLEEGEVSGKTNRLVDDLPLFSVAMKREAPKPVKSDALGAALGDINPDEMTPREALEALYRLKGLAGK</sequence>
<feature type="chain" id="PRO_0000115125" description="DNA mismatch repair protein MutS">
    <location>
        <begin position="1"/>
        <end position="909"/>
    </location>
</feature>
<feature type="region of interest" description="Disordered" evidence="2">
    <location>
        <begin position="275"/>
        <end position="295"/>
    </location>
</feature>
<feature type="compositionally biased region" description="Basic and acidic residues" evidence="2">
    <location>
        <begin position="275"/>
        <end position="290"/>
    </location>
</feature>
<feature type="binding site" evidence="1">
    <location>
        <begin position="661"/>
        <end position="668"/>
    </location>
    <ligand>
        <name>ATP</name>
        <dbReference type="ChEBI" id="CHEBI:30616"/>
    </ligand>
</feature>